<proteinExistence type="inferred from homology"/>
<evidence type="ECO:0000255" key="1">
    <source>
        <dbReference type="HAMAP-Rule" id="MF_00137"/>
    </source>
</evidence>
<comment type="catalytic activity">
    <reaction evidence="1">
        <text>5-amino-1-(5-phospho-D-ribosyl)imidazole-4-carboxylate + L-aspartate + ATP = (2S)-2-[5-amino-1-(5-phospho-beta-D-ribosyl)imidazole-4-carboxamido]succinate + ADP + phosphate + 2 H(+)</text>
        <dbReference type="Rhea" id="RHEA:22628"/>
        <dbReference type="ChEBI" id="CHEBI:15378"/>
        <dbReference type="ChEBI" id="CHEBI:29991"/>
        <dbReference type="ChEBI" id="CHEBI:30616"/>
        <dbReference type="ChEBI" id="CHEBI:43474"/>
        <dbReference type="ChEBI" id="CHEBI:58443"/>
        <dbReference type="ChEBI" id="CHEBI:77657"/>
        <dbReference type="ChEBI" id="CHEBI:456216"/>
        <dbReference type="EC" id="6.3.2.6"/>
    </reaction>
</comment>
<comment type="pathway">
    <text evidence="1">Purine metabolism; IMP biosynthesis via de novo pathway; 5-amino-1-(5-phospho-D-ribosyl)imidazole-4-carboxamide from 5-amino-1-(5-phospho-D-ribosyl)imidazole-4-carboxylate: step 1/2.</text>
</comment>
<comment type="similarity">
    <text evidence="1">Belongs to the SAICAR synthetase family.</text>
</comment>
<name>PUR7_METPP</name>
<sequence length="300" mass="32716">MSATTPLLESRLQSLPLLARGKVRDNYAVGSDRLLMVASDRLSAFDVVMGEPIPGKGELLTRMALFWFARLGHIVPNHLTGDAPESVVSAAERSQVTGRSMLVKRLKPLPVEAVVRGYLAGSGWKEYQHNGQVCGVKLPPGLKNASKLPSPIFTPATKAEMGEHDENIPFERMVEIIGAPLAEQVRRVAIALYETAAAFALGKGIIIADTKFEFGLDEAGTLTLMDEVLTPDSSRFWPVEGYAEGINPPSYDKQFVRDWLEQAVVDGRPWNKQAPAPALPADVVARTAAKYREALERLTA</sequence>
<accession>A2SCG5</accession>
<keyword id="KW-0067">ATP-binding</keyword>
<keyword id="KW-0436">Ligase</keyword>
<keyword id="KW-0547">Nucleotide-binding</keyword>
<keyword id="KW-0658">Purine biosynthesis</keyword>
<keyword id="KW-1185">Reference proteome</keyword>
<organism>
    <name type="scientific">Methylibium petroleiphilum (strain ATCC BAA-1232 / LMG 22953 / PM1)</name>
    <dbReference type="NCBI Taxonomy" id="420662"/>
    <lineage>
        <taxon>Bacteria</taxon>
        <taxon>Pseudomonadati</taxon>
        <taxon>Pseudomonadota</taxon>
        <taxon>Betaproteobacteria</taxon>
        <taxon>Burkholderiales</taxon>
        <taxon>Sphaerotilaceae</taxon>
        <taxon>Methylibium</taxon>
    </lineage>
</organism>
<gene>
    <name evidence="1" type="primary">purC</name>
    <name type="ordered locus">Mpe_A0292</name>
</gene>
<feature type="chain" id="PRO_1000057887" description="Phosphoribosylaminoimidazole-succinocarboxamide synthase">
    <location>
        <begin position="1"/>
        <end position="300"/>
    </location>
</feature>
<protein>
    <recommendedName>
        <fullName evidence="1">Phosphoribosylaminoimidazole-succinocarboxamide synthase</fullName>
        <ecNumber evidence="1">6.3.2.6</ecNumber>
    </recommendedName>
    <alternativeName>
        <fullName evidence="1">SAICAR synthetase</fullName>
    </alternativeName>
</protein>
<reference key="1">
    <citation type="journal article" date="2007" name="J. Bacteriol.">
        <title>Whole-genome analysis of the methyl tert-butyl ether-degrading beta-proteobacterium Methylibium petroleiphilum PM1.</title>
        <authorList>
            <person name="Kane S.R."/>
            <person name="Chakicherla A.Y."/>
            <person name="Chain P.S.G."/>
            <person name="Schmidt R."/>
            <person name="Shin M.W."/>
            <person name="Legler T.C."/>
            <person name="Scow K.M."/>
            <person name="Larimer F.W."/>
            <person name="Lucas S.M."/>
            <person name="Richardson P.M."/>
            <person name="Hristova K.R."/>
        </authorList>
    </citation>
    <scope>NUCLEOTIDE SEQUENCE [LARGE SCALE GENOMIC DNA]</scope>
    <source>
        <strain>ATCC BAA-1232 / LMG 22953 / PM1</strain>
    </source>
</reference>
<dbReference type="EC" id="6.3.2.6" evidence="1"/>
<dbReference type="EMBL" id="CP000555">
    <property type="protein sequence ID" value="ABM93254.1"/>
    <property type="molecule type" value="Genomic_DNA"/>
</dbReference>
<dbReference type="RefSeq" id="WP_011827893.1">
    <property type="nucleotide sequence ID" value="NC_008825.1"/>
</dbReference>
<dbReference type="SMR" id="A2SCG5"/>
<dbReference type="STRING" id="420662.Mpe_A0292"/>
<dbReference type="KEGG" id="mpt:Mpe_A0292"/>
<dbReference type="eggNOG" id="COG0152">
    <property type="taxonomic scope" value="Bacteria"/>
</dbReference>
<dbReference type="HOGENOM" id="CLU_045637_0_0_4"/>
<dbReference type="UniPathway" id="UPA00074">
    <property type="reaction ID" value="UER00131"/>
</dbReference>
<dbReference type="Proteomes" id="UP000000366">
    <property type="component" value="Chromosome"/>
</dbReference>
<dbReference type="GO" id="GO:0005737">
    <property type="term" value="C:cytoplasm"/>
    <property type="evidence" value="ECO:0007669"/>
    <property type="project" value="TreeGrafter"/>
</dbReference>
<dbReference type="GO" id="GO:0005524">
    <property type="term" value="F:ATP binding"/>
    <property type="evidence" value="ECO:0007669"/>
    <property type="project" value="UniProtKB-KW"/>
</dbReference>
<dbReference type="GO" id="GO:0004639">
    <property type="term" value="F:phosphoribosylaminoimidazolesuccinocarboxamide synthase activity"/>
    <property type="evidence" value="ECO:0007669"/>
    <property type="project" value="UniProtKB-UniRule"/>
</dbReference>
<dbReference type="GO" id="GO:0006189">
    <property type="term" value="P:'de novo' IMP biosynthetic process"/>
    <property type="evidence" value="ECO:0007669"/>
    <property type="project" value="UniProtKB-UniRule"/>
</dbReference>
<dbReference type="CDD" id="cd01414">
    <property type="entry name" value="SAICAR_synt_Sc"/>
    <property type="match status" value="1"/>
</dbReference>
<dbReference type="FunFam" id="3.30.470.20:FF:000015">
    <property type="entry name" value="Phosphoribosylaminoimidazole-succinocarboxamide synthase"/>
    <property type="match status" value="1"/>
</dbReference>
<dbReference type="Gene3D" id="3.30.470.20">
    <property type="entry name" value="ATP-grasp fold, B domain"/>
    <property type="match status" value="1"/>
</dbReference>
<dbReference type="Gene3D" id="3.30.200.20">
    <property type="entry name" value="Phosphorylase Kinase, domain 1"/>
    <property type="match status" value="1"/>
</dbReference>
<dbReference type="HAMAP" id="MF_00137">
    <property type="entry name" value="SAICAR_synth"/>
    <property type="match status" value="1"/>
</dbReference>
<dbReference type="InterPro" id="IPR028923">
    <property type="entry name" value="SAICAR_synt/ADE2_N"/>
</dbReference>
<dbReference type="InterPro" id="IPR001636">
    <property type="entry name" value="SAICAR_synth"/>
</dbReference>
<dbReference type="InterPro" id="IPR018236">
    <property type="entry name" value="SAICAR_synthetase_CS"/>
</dbReference>
<dbReference type="NCBIfam" id="NF010568">
    <property type="entry name" value="PRK13961.1"/>
    <property type="match status" value="1"/>
</dbReference>
<dbReference type="NCBIfam" id="TIGR00081">
    <property type="entry name" value="purC"/>
    <property type="match status" value="1"/>
</dbReference>
<dbReference type="PANTHER" id="PTHR43700">
    <property type="entry name" value="PHOSPHORIBOSYLAMINOIMIDAZOLE-SUCCINOCARBOXAMIDE SYNTHASE"/>
    <property type="match status" value="1"/>
</dbReference>
<dbReference type="PANTHER" id="PTHR43700:SF1">
    <property type="entry name" value="PHOSPHORIBOSYLAMINOIMIDAZOLE-SUCCINOCARBOXAMIDE SYNTHASE"/>
    <property type="match status" value="1"/>
</dbReference>
<dbReference type="Pfam" id="PF01259">
    <property type="entry name" value="SAICAR_synt"/>
    <property type="match status" value="1"/>
</dbReference>
<dbReference type="SUPFAM" id="SSF56104">
    <property type="entry name" value="SAICAR synthase-like"/>
    <property type="match status" value="1"/>
</dbReference>
<dbReference type="PROSITE" id="PS01057">
    <property type="entry name" value="SAICAR_SYNTHETASE_1"/>
    <property type="match status" value="1"/>
</dbReference>
<dbReference type="PROSITE" id="PS01058">
    <property type="entry name" value="SAICAR_SYNTHETASE_2"/>
    <property type="match status" value="1"/>
</dbReference>